<feature type="chain" id="PRO_0000089757" description="Citrate lyase subunit beta">
    <location>
        <begin position="1"/>
        <end position="302"/>
    </location>
</feature>
<feature type="binding site" evidence="1">
    <location>
        <position position="76"/>
    </location>
    <ligand>
        <name>substrate</name>
    </ligand>
</feature>
<feature type="binding site" evidence="1">
    <location>
        <position position="139"/>
    </location>
    <ligand>
        <name>Mg(2+)</name>
        <dbReference type="ChEBI" id="CHEBI:18420"/>
    </ligand>
</feature>
<feature type="binding site" evidence="1">
    <location>
        <position position="139"/>
    </location>
    <ligand>
        <name>substrate</name>
    </ligand>
</feature>
<feature type="binding site" evidence="1">
    <location>
        <position position="166"/>
    </location>
    <ligand>
        <name>Mg(2+)</name>
        <dbReference type="ChEBI" id="CHEBI:18420"/>
    </ligand>
</feature>
<feature type="sequence conflict" description="In Ref. 5; AAC28948." evidence="3" ref="5">
    <original>IAHASER</original>
    <variation>SLTLPRL</variation>
    <location>
        <begin position="150"/>
        <end position="156"/>
    </location>
</feature>
<reference key="1">
    <citation type="journal article" date="1996" name="DNA Res.">
        <title>A 718-kb DNA sequence of the Escherichia coli K-12 genome corresponding to the 12.7-28.0 min region on the linkage map.</title>
        <authorList>
            <person name="Oshima T."/>
            <person name="Aiba H."/>
            <person name="Baba T."/>
            <person name="Fujita K."/>
            <person name="Hayashi K."/>
            <person name="Honjo A."/>
            <person name="Ikemoto K."/>
            <person name="Inada T."/>
            <person name="Itoh T."/>
            <person name="Kajihara M."/>
            <person name="Kanai K."/>
            <person name="Kashimoto K."/>
            <person name="Kimura S."/>
            <person name="Kitagawa M."/>
            <person name="Makino K."/>
            <person name="Masuda S."/>
            <person name="Miki T."/>
            <person name="Mizobuchi K."/>
            <person name="Mori H."/>
            <person name="Motomura K."/>
            <person name="Nakamura Y."/>
            <person name="Nashimoto H."/>
            <person name="Nishio Y."/>
            <person name="Saito N."/>
            <person name="Sampei G."/>
            <person name="Seki Y."/>
            <person name="Tagami H."/>
            <person name="Takemoto K."/>
            <person name="Wada C."/>
            <person name="Yamamoto Y."/>
            <person name="Yano M."/>
            <person name="Horiuchi T."/>
        </authorList>
    </citation>
    <scope>NUCLEOTIDE SEQUENCE [LARGE SCALE GENOMIC DNA]</scope>
    <source>
        <strain>K12 / W3110 / ATCC 27325 / DSM 5911</strain>
    </source>
</reference>
<reference key="2">
    <citation type="submission" date="1997-01" db="EMBL/GenBank/DDBJ databases">
        <title>Sequence of minutes 4-25 of Escherichia coli.</title>
        <authorList>
            <person name="Chung E."/>
            <person name="Allen E."/>
            <person name="Araujo R."/>
            <person name="Aparicio A.M."/>
            <person name="Davis K."/>
            <person name="Duncan M."/>
            <person name="Federspiel N."/>
            <person name="Hyman R."/>
            <person name="Kalman S."/>
            <person name="Komp C."/>
            <person name="Kurdi O."/>
            <person name="Lew H."/>
            <person name="Lin D."/>
            <person name="Namath A."/>
            <person name="Oefner P."/>
            <person name="Roberts D."/>
            <person name="Schramm S."/>
            <person name="Davis R.W."/>
        </authorList>
    </citation>
    <scope>NUCLEOTIDE SEQUENCE [LARGE SCALE GENOMIC DNA]</scope>
    <source>
        <strain>K12 / MG1655 / ATCC 47076</strain>
    </source>
</reference>
<reference key="3">
    <citation type="journal article" date="1997" name="Science">
        <title>The complete genome sequence of Escherichia coli K-12.</title>
        <authorList>
            <person name="Blattner F.R."/>
            <person name="Plunkett G. III"/>
            <person name="Bloch C.A."/>
            <person name="Perna N.T."/>
            <person name="Burland V."/>
            <person name="Riley M."/>
            <person name="Collado-Vides J."/>
            <person name="Glasner J.D."/>
            <person name="Rode C.K."/>
            <person name="Mayhew G.F."/>
            <person name="Gregor J."/>
            <person name="Davis N.W."/>
            <person name="Kirkpatrick H.A."/>
            <person name="Goeden M.A."/>
            <person name="Rose D.J."/>
            <person name="Mau B."/>
            <person name="Shao Y."/>
        </authorList>
    </citation>
    <scope>NUCLEOTIDE SEQUENCE [LARGE SCALE GENOMIC DNA]</scope>
    <source>
        <strain>K12 / MG1655 / ATCC 47076</strain>
    </source>
</reference>
<reference key="4">
    <citation type="journal article" date="2006" name="Mol. Syst. Biol.">
        <title>Highly accurate genome sequences of Escherichia coli K-12 strains MG1655 and W3110.</title>
        <authorList>
            <person name="Hayashi K."/>
            <person name="Morooka N."/>
            <person name="Yamamoto Y."/>
            <person name="Fujita K."/>
            <person name="Isono K."/>
            <person name="Choi S."/>
            <person name="Ohtsubo E."/>
            <person name="Baba T."/>
            <person name="Wanner B.L."/>
            <person name="Mori H."/>
            <person name="Horiuchi T."/>
        </authorList>
    </citation>
    <scope>NUCLEOTIDE SEQUENCE [LARGE SCALE GENOMIC DNA]</scope>
    <source>
        <strain>K12 / W3110 / ATCC 27325 / DSM 5911</strain>
    </source>
</reference>
<reference key="5">
    <citation type="submission" date="1996-01" db="EMBL/GenBank/DDBJ databases">
        <authorList>
            <person name="Ingmer H."/>
            <person name="Cohen S.N."/>
        </authorList>
    </citation>
    <scope>NUCLEOTIDE SEQUENCE [GENOMIC DNA] OF 1-156</scope>
    <source>
        <strain>K12 / MG1655 / ATCC 47076</strain>
    </source>
</reference>
<reference key="6">
    <citation type="journal article" date="2009" name="J. Bacteriol.">
        <title>Involvement of the leucine response transcription factor LeuO in regulation of the genes for sulfa drug efflux.</title>
        <authorList>
            <person name="Shimada T."/>
            <person name="Yamamoto K."/>
            <person name="Ishihama A."/>
        </authorList>
    </citation>
    <scope>OPERON STRUCTURE</scope>
    <scope>INDUCTION</scope>
    <source>
        <strain>K12 / BW25113</strain>
    </source>
</reference>
<gene>
    <name type="primary">citE</name>
    <name type="synonym">ybdW</name>
    <name type="ordered locus">b0616</name>
    <name type="ordered locus">JW0608</name>
</gene>
<proteinExistence type="evidence at transcript level"/>
<comment type="function">
    <text evidence="1">Represents a citryl-ACP lyase.</text>
</comment>
<comment type="catalytic activity">
    <reaction>
        <text>citrate = oxaloacetate + acetate</text>
        <dbReference type="Rhea" id="RHEA:10760"/>
        <dbReference type="ChEBI" id="CHEBI:16452"/>
        <dbReference type="ChEBI" id="CHEBI:16947"/>
        <dbReference type="ChEBI" id="CHEBI:30089"/>
        <dbReference type="EC" id="4.1.3.6"/>
    </reaction>
</comment>
<comment type="catalytic activity">
    <reaction>
        <text>(3S)-citryl-CoA = oxaloacetate + acetyl-CoA</text>
        <dbReference type="Rhea" id="RHEA:20812"/>
        <dbReference type="ChEBI" id="CHEBI:16452"/>
        <dbReference type="ChEBI" id="CHEBI:57288"/>
        <dbReference type="ChEBI" id="CHEBI:57321"/>
        <dbReference type="EC" id="4.1.3.34"/>
    </reaction>
</comment>
<comment type="cofactor">
    <cofactor evidence="1">
        <name>Mg(2+)</name>
        <dbReference type="ChEBI" id="CHEBI:18420"/>
    </cofactor>
    <text evidence="1">Binds 1 Mg(2+) ion per subunit.</text>
</comment>
<comment type="subunit">
    <text evidence="1">Oligomer with a subunit composition of (alpha,beta,gamma)6.</text>
</comment>
<comment type="subcellular location">
    <subcellularLocation>
        <location>Cytoplasm</location>
    </subcellularLocation>
</comment>
<comment type="induction">
    <text evidence="2">Repressed by H-NS. Part of the citCDEFXG operon.</text>
</comment>
<comment type="similarity">
    <text evidence="3">Belongs to the HpcH/HpaI aldolase family. Citrate lyase beta subunit subfamily.</text>
</comment>
<comment type="sequence caution" evidence="3">
    <conflict type="erroneous initiation">
        <sequence resource="EMBL-CDS" id="AAB40816"/>
    </conflict>
    <text>Extended N-terminus.</text>
</comment>
<dbReference type="EC" id="4.1.3.6"/>
<dbReference type="EC" id="4.1.3.34"/>
<dbReference type="EMBL" id="U82598">
    <property type="protein sequence ID" value="AAB40816.1"/>
    <property type="status" value="ALT_INIT"/>
    <property type="molecule type" value="Genomic_DNA"/>
</dbReference>
<dbReference type="EMBL" id="U00096">
    <property type="protein sequence ID" value="AAC73717.2"/>
    <property type="molecule type" value="Genomic_DNA"/>
</dbReference>
<dbReference type="EMBL" id="AP009048">
    <property type="protein sequence ID" value="BAA35252.1"/>
    <property type="molecule type" value="Genomic_DNA"/>
</dbReference>
<dbReference type="EMBL" id="U46667">
    <property type="protein sequence ID" value="AAC28948.1"/>
    <property type="molecule type" value="Genomic_DNA"/>
</dbReference>
<dbReference type="PIR" id="F64795">
    <property type="entry name" value="F64795"/>
</dbReference>
<dbReference type="RefSeq" id="NP_415149.4">
    <property type="nucleotide sequence ID" value="NC_000913.3"/>
</dbReference>
<dbReference type="RefSeq" id="WP_000622357.1">
    <property type="nucleotide sequence ID" value="NZ_STEB01000031.1"/>
</dbReference>
<dbReference type="SMR" id="P0A9I1"/>
<dbReference type="BioGRID" id="4261999">
    <property type="interactions" value="12"/>
</dbReference>
<dbReference type="BioGRID" id="849780">
    <property type="interactions" value="6"/>
</dbReference>
<dbReference type="ComplexPortal" id="CPX-4781">
    <property type="entry name" value="Citrate lyase complex"/>
</dbReference>
<dbReference type="DIP" id="DIP-9285N"/>
<dbReference type="FunCoup" id="P0A9I1">
    <property type="interactions" value="455"/>
</dbReference>
<dbReference type="IntAct" id="P0A9I1">
    <property type="interactions" value="9"/>
</dbReference>
<dbReference type="STRING" id="511145.b0616"/>
<dbReference type="PaxDb" id="511145-b0616"/>
<dbReference type="EnsemblBacteria" id="AAC73717">
    <property type="protein sequence ID" value="AAC73717"/>
    <property type="gene ID" value="b0616"/>
</dbReference>
<dbReference type="GeneID" id="93776869"/>
<dbReference type="GeneID" id="945406"/>
<dbReference type="KEGG" id="ecj:JW0608"/>
<dbReference type="KEGG" id="eco:b0616"/>
<dbReference type="KEGG" id="ecoc:C3026_03080"/>
<dbReference type="PATRIC" id="fig|1411691.4.peg.1652"/>
<dbReference type="EchoBASE" id="EB3312"/>
<dbReference type="eggNOG" id="COG2301">
    <property type="taxonomic scope" value="Bacteria"/>
</dbReference>
<dbReference type="HOGENOM" id="CLU_044864_0_0_6"/>
<dbReference type="InParanoid" id="P0A9I1"/>
<dbReference type="OMA" id="AWLFCPA"/>
<dbReference type="OrthoDB" id="6831788at2"/>
<dbReference type="PhylomeDB" id="P0A9I1"/>
<dbReference type="BioCyc" id="EcoCyc:CITRYLY-MONOMER"/>
<dbReference type="BioCyc" id="MetaCyc:CITRYLY-MONOMER"/>
<dbReference type="PRO" id="PR:P0A9I1"/>
<dbReference type="Proteomes" id="UP000000625">
    <property type="component" value="Chromosome"/>
</dbReference>
<dbReference type="GO" id="GO:0009346">
    <property type="term" value="C:ATP-independent citrate lyase complex"/>
    <property type="evidence" value="ECO:0000353"/>
    <property type="project" value="ComplexPortal"/>
</dbReference>
<dbReference type="GO" id="GO:0005737">
    <property type="term" value="C:cytoplasm"/>
    <property type="evidence" value="ECO:0007669"/>
    <property type="project" value="UniProtKB-SubCell"/>
</dbReference>
<dbReference type="GO" id="GO:0008815">
    <property type="term" value="F:citrate (pro-3S)-lyase activity"/>
    <property type="evidence" value="ECO:0007669"/>
    <property type="project" value="UniProtKB-EC"/>
</dbReference>
<dbReference type="GO" id="GO:0008816">
    <property type="term" value="F:citryl-CoA lyase activity"/>
    <property type="evidence" value="ECO:0007669"/>
    <property type="project" value="UniProtKB-EC"/>
</dbReference>
<dbReference type="GO" id="GO:0000287">
    <property type="term" value="F:magnesium ion binding"/>
    <property type="evidence" value="ECO:0000318"/>
    <property type="project" value="GO_Central"/>
</dbReference>
<dbReference type="GO" id="GO:0006084">
    <property type="term" value="P:acetyl-CoA metabolic process"/>
    <property type="evidence" value="ECO:0000314"/>
    <property type="project" value="ComplexPortal"/>
</dbReference>
<dbReference type="GO" id="GO:0006101">
    <property type="term" value="P:citrate metabolic process"/>
    <property type="evidence" value="ECO:0000314"/>
    <property type="project" value="ComplexPortal"/>
</dbReference>
<dbReference type="GO" id="GO:0006107">
    <property type="term" value="P:oxaloacetate metabolic process"/>
    <property type="evidence" value="ECO:0000318"/>
    <property type="project" value="GO_Central"/>
</dbReference>
<dbReference type="FunFam" id="3.20.20.60:FF:000008">
    <property type="entry name" value="Citrate (Pro-3S)-lyase subunit beta"/>
    <property type="match status" value="1"/>
</dbReference>
<dbReference type="Gene3D" id="3.20.20.60">
    <property type="entry name" value="Phosphoenolpyruvate-binding domains"/>
    <property type="match status" value="1"/>
</dbReference>
<dbReference type="InterPro" id="IPR005000">
    <property type="entry name" value="Aldolase/citrate-lyase_domain"/>
</dbReference>
<dbReference type="InterPro" id="IPR011206">
    <property type="entry name" value="Citrate_lyase_beta/mcl1/mcl2"/>
</dbReference>
<dbReference type="InterPro" id="IPR006475">
    <property type="entry name" value="Citrate_lyase_beta_bac"/>
</dbReference>
<dbReference type="InterPro" id="IPR015813">
    <property type="entry name" value="Pyrv/PenolPyrv_kinase-like_dom"/>
</dbReference>
<dbReference type="InterPro" id="IPR040442">
    <property type="entry name" value="Pyrv_kinase-like_dom_sf"/>
</dbReference>
<dbReference type="NCBIfam" id="TIGR01588">
    <property type="entry name" value="citE"/>
    <property type="match status" value="1"/>
</dbReference>
<dbReference type="PANTHER" id="PTHR32308:SF10">
    <property type="entry name" value="CITRATE LYASE SUBUNIT BETA"/>
    <property type="match status" value="1"/>
</dbReference>
<dbReference type="PANTHER" id="PTHR32308">
    <property type="entry name" value="LYASE BETA SUBUNIT, PUTATIVE (AFU_ORTHOLOGUE AFUA_4G13030)-RELATED"/>
    <property type="match status" value="1"/>
</dbReference>
<dbReference type="Pfam" id="PF03328">
    <property type="entry name" value="HpcH_HpaI"/>
    <property type="match status" value="1"/>
</dbReference>
<dbReference type="PIRSF" id="PIRSF015582">
    <property type="entry name" value="Cit_lyase_B"/>
    <property type="match status" value="1"/>
</dbReference>
<dbReference type="SUPFAM" id="SSF51621">
    <property type="entry name" value="Phosphoenolpyruvate/pyruvate domain"/>
    <property type="match status" value="1"/>
</dbReference>
<protein>
    <recommendedName>
        <fullName>Citrate lyase subunit beta</fullName>
        <shortName>Citrase beta chain</shortName>
        <ecNumber>4.1.3.6</ecNumber>
    </recommendedName>
    <alternativeName>
        <fullName>Citrate (pro-3S)-lyase subunit beta</fullName>
    </alternativeName>
    <alternativeName>
        <fullName>Citryl-CoA lyase subunit</fullName>
        <ecNumber>4.1.3.34</ecNumber>
    </alternativeName>
</protein>
<organism>
    <name type="scientific">Escherichia coli (strain K12)</name>
    <dbReference type="NCBI Taxonomy" id="83333"/>
    <lineage>
        <taxon>Bacteria</taxon>
        <taxon>Pseudomonadati</taxon>
        <taxon>Pseudomonadota</taxon>
        <taxon>Gammaproteobacteria</taxon>
        <taxon>Enterobacterales</taxon>
        <taxon>Enterobacteriaceae</taxon>
        <taxon>Escherichia</taxon>
    </lineage>
</organism>
<evidence type="ECO:0000250" key="1"/>
<evidence type="ECO:0000269" key="2">
    <source>
    </source>
</evidence>
<evidence type="ECO:0000305" key="3"/>
<accession>P0A9I1</accession>
<accession>O54335</accession>
<accession>P77770</accession>
<keyword id="KW-0963">Cytoplasm</keyword>
<keyword id="KW-0456">Lyase</keyword>
<keyword id="KW-0460">Magnesium</keyword>
<keyword id="KW-0479">Metal-binding</keyword>
<keyword id="KW-1185">Reference proteome</keyword>
<sequence>MISASLQQRKTRTRRSMLFVPGANAAMVSNSFIYPADALMFDLEDSVALREKDTARRMVYHALQHPLYRDIETIVRVNALDSEWGVNDLEAVVRGGADVVRLPKTDTAQDVLDIEKEILRIEKACGREPGSTGLLAAIESPLGITRAVEIAHASERLIGIALGAEDYVRNLRTERSPEGTELLFARCSILQAARSAGIQAFDTVYSDANNEAGFLQEAAHIKQLGFDGKSLINPRQIDLLHNLYAPTQKEVDHARRVVEAAEAAAREGLGVVSLNGKMVDGPVIDRARLVLSRAELSGIREE</sequence>
<name>CITE_ECOLI</name>